<gene>
    <name type="ORF">BN5_3198</name>
</gene>
<reference key="1">
    <citation type="submission" date="2013-11" db="EMBL/GenBank/DDBJ databases">
        <title>Complete genome sequence of the cyanide-degrading bacterium Pseudomonas pseudoalcaligenes CECT 5344.</title>
        <authorList>
            <person name="Wibberg D."/>
            <person name="Puehler A."/>
            <person name="Schlueter A."/>
        </authorList>
    </citation>
    <scope>NUCLEOTIDE SEQUENCE [LARGE SCALE GENOMIC DNA]</scope>
    <source>
        <strain>CECT 5344</strain>
    </source>
</reference>
<reference key="2">
    <citation type="journal article" date="2017" name="Appl. Environ. Microbiol.">
        <title>High resolution X-ray structures of two functionally distinct members of the cyclic amide hydrolase (CyAH) family of Toblerone fold enzymes.</title>
        <authorList>
            <person name="Peat T.S."/>
            <person name="Balotra S."/>
            <person name="Wilding M."/>
            <person name="Hartley C.J."/>
            <person name="Newman J."/>
            <person name="Scott C."/>
        </authorList>
    </citation>
    <scope>FUNCTION</scope>
    <scope>CATALYTIC ACTIVITY</scope>
    <scope>BIOPHYSICOCHEMICAL PROPERTIES</scope>
</reference>
<name>CAH_ECTO5</name>
<evidence type="ECO:0000250" key="1">
    <source>
        <dbReference type="UniProtKB" id="P58329"/>
    </source>
</evidence>
<evidence type="ECO:0000255" key="2">
    <source>
        <dbReference type="HAMAP-Rule" id="MF_01989"/>
    </source>
</evidence>
<evidence type="ECO:0000269" key="3">
    <source>
    </source>
</evidence>
<evidence type="ECO:0000305" key="4"/>
<protein>
    <recommendedName>
        <fullName evidence="2">Cyanuric acid amidohydrolase</fullName>
        <shortName evidence="2">CAH</shortName>
        <ecNumber evidence="2 3">3.5.2.15</ecNumber>
    </recommendedName>
</protein>
<organism>
    <name type="scientific">Ectopseudomonas oleovorans (strain CECT 5344)</name>
    <name type="common">Pseudomonas pseudoalcaligenes</name>
    <dbReference type="NCBI Taxonomy" id="1182590"/>
    <lineage>
        <taxon>Bacteria</taxon>
        <taxon>Pseudomonadati</taxon>
        <taxon>Pseudomonadota</taxon>
        <taxon>Gammaproteobacteria</taxon>
        <taxon>Pseudomonadales</taxon>
        <taxon>Pseudomonadaceae</taxon>
        <taxon>Ectopseudomonas</taxon>
    </lineage>
</organism>
<feature type="chain" id="PRO_0000439916" description="Cyanuric acid amidohydrolase">
    <location>
        <begin position="1"/>
        <end position="363"/>
    </location>
</feature>
<feature type="region of interest" description="RU A" evidence="2">
    <location>
        <begin position="1"/>
        <end position="103"/>
    </location>
</feature>
<feature type="region of interest" description="RU B" evidence="2">
    <location>
        <begin position="111"/>
        <end position="247"/>
    </location>
</feature>
<feature type="region of interest" description="RU C" evidence="2">
    <location>
        <begin position="253"/>
        <end position="363"/>
    </location>
</feature>
<feature type="active site" evidence="2">
    <location>
        <position position="161"/>
    </location>
</feature>
<feature type="active site" description="Nucleophile" evidence="2">
    <location>
        <position position="230"/>
    </location>
</feature>
<feature type="binding site" evidence="2">
    <location>
        <position position="51"/>
    </location>
    <ligand>
        <name>substrate</name>
    </ligand>
</feature>
<feature type="binding site" evidence="2">
    <location>
        <begin position="82"/>
        <end position="83"/>
    </location>
    <ligand>
        <name>substrate</name>
    </ligand>
</feature>
<feature type="binding site" evidence="2">
    <location>
        <position position="193"/>
    </location>
    <ligand>
        <name>substrate</name>
    </ligand>
</feature>
<feature type="binding site" evidence="2">
    <location>
        <begin position="230"/>
        <end position="231"/>
    </location>
    <ligand>
        <name>substrate</name>
    </ligand>
</feature>
<feature type="binding site" evidence="2">
    <location>
        <position position="297"/>
    </location>
    <ligand>
        <name>Mg(2+)</name>
        <dbReference type="ChEBI" id="CHEBI:18420"/>
        <note>structural</note>
    </ligand>
</feature>
<feature type="binding site" evidence="2">
    <location>
        <position position="324"/>
    </location>
    <ligand>
        <name>substrate</name>
    </ligand>
</feature>
<feature type="binding site" evidence="2">
    <location>
        <begin position="343"/>
        <end position="344"/>
    </location>
    <ligand>
        <name>substrate</name>
    </ligand>
</feature>
<feature type="binding site" evidence="2">
    <location>
        <position position="346"/>
    </location>
    <ligand>
        <name>Mg(2+)</name>
        <dbReference type="ChEBI" id="CHEBI:18420"/>
        <note>structural</note>
    </ligand>
</feature>
<feature type="binding site" evidence="2">
    <location>
        <position position="349"/>
    </location>
    <ligand>
        <name>Mg(2+)</name>
        <dbReference type="ChEBI" id="CHEBI:18420"/>
        <note>structural</note>
    </ligand>
</feature>
<feature type="binding site" evidence="2">
    <location>
        <position position="350"/>
    </location>
    <ligand>
        <name>Mg(2+)</name>
        <dbReference type="ChEBI" id="CHEBI:18420"/>
        <note>structural</note>
    </ligand>
</feature>
<feature type="binding site" evidence="2">
    <location>
        <position position="351"/>
    </location>
    <ligand>
        <name>Mg(2+)</name>
        <dbReference type="ChEBI" id="CHEBI:18420"/>
        <note>structural</note>
    </ligand>
</feature>
<feature type="binding site" evidence="2">
    <location>
        <position position="354"/>
    </location>
    <ligand>
        <name>Mg(2+)</name>
        <dbReference type="ChEBI" id="CHEBI:18420"/>
        <note>structural</note>
    </ligand>
</feature>
<feature type="site" description="Important for substrate specificity" evidence="2">
    <location>
        <position position="320"/>
    </location>
</feature>
<sequence length="363" mass="38279">MKTRVTRLTVAAPNDVSALAQAIESGEVDPTRVIAVLGKTEGNGCVNDFTRAFATSTLKRFFAERLALNETEVDERIAFVMSGGTEGGLSPHWLVFEVDDSAPSRDTTTPGLAAGVAFTRDLRPEEIGRTSQVELTRDAVLRAMAAAGIQRVEDVHFVQIKCPLLTAARINEAAARGQSVACHDTYESMGYSRGASALGVAAALGDLPGDVRDEQICREWSLYSSRASSSAGIELLRNEVLVLGNAPGWDPEYRIGHAVMEDALDAQAIERALASVPGGDKIKLTPERLAGLLVKAEPSASGSIRGNRHVMSDDSDINGSRHARALVGGVLAGQLGDTRLFVSGGAEHQGPNGGGPLALIVRS</sequence>
<keyword id="KW-0378">Hydrolase</keyword>
<keyword id="KW-0460">Magnesium</keyword>
<keyword id="KW-0479">Metal-binding</keyword>
<proteinExistence type="evidence at protein level"/>
<dbReference type="EC" id="3.5.2.15" evidence="2 3"/>
<dbReference type="EMBL" id="HG916826">
    <property type="protein sequence ID" value="CDM41754.1"/>
    <property type="molecule type" value="Genomic_DNA"/>
</dbReference>
<dbReference type="RefSeq" id="WP_003459769.1">
    <property type="nucleotide sequence ID" value="NZ_HG916826.1"/>
</dbReference>
<dbReference type="SMR" id="W6RJ11"/>
<dbReference type="GeneID" id="61800832"/>
<dbReference type="KEGG" id="ppse:BN5_3198"/>
<dbReference type="eggNOG" id="ENOG502Z8BS">
    <property type="taxonomic scope" value="Bacteria"/>
</dbReference>
<dbReference type="HOGENOM" id="CLU_808206_0_0_6"/>
<dbReference type="OrthoDB" id="569708at2"/>
<dbReference type="SABIO-RK" id="W6RJ11"/>
<dbReference type="UniPathway" id="UPA00008">
    <property type="reaction ID" value="UER00502"/>
</dbReference>
<dbReference type="Proteomes" id="UP000032841">
    <property type="component" value="Chromosome"/>
</dbReference>
<dbReference type="GO" id="GO:0018753">
    <property type="term" value="F:cyanuric acid amidohydrolase activity"/>
    <property type="evidence" value="ECO:0007669"/>
    <property type="project" value="UniProtKB-UniRule"/>
</dbReference>
<dbReference type="GO" id="GO:0046872">
    <property type="term" value="F:metal ion binding"/>
    <property type="evidence" value="ECO:0007669"/>
    <property type="project" value="UniProtKB-UniRule"/>
</dbReference>
<dbReference type="GO" id="GO:0019381">
    <property type="term" value="P:atrazine catabolic process"/>
    <property type="evidence" value="ECO:0007669"/>
    <property type="project" value="UniProtKB-UniRule"/>
</dbReference>
<dbReference type="Gene3D" id="3.30.1330.160">
    <property type="entry name" value="Cyanuric acid hydrolase/Barbituras, RU C"/>
    <property type="match status" value="1"/>
</dbReference>
<dbReference type="Gene3D" id="3.30.1330.170">
    <property type="entry name" value="Cyanuric acid hydrolase/Barbiturase, RU A"/>
    <property type="match status" value="1"/>
</dbReference>
<dbReference type="Gene3D" id="3.30.1330.180">
    <property type="entry name" value="Cyanuric acid hydrolase/Barbiturase, RU B"/>
    <property type="match status" value="1"/>
</dbReference>
<dbReference type="HAMAP" id="MF_01989">
    <property type="entry name" value="Cyc_amidohydrol"/>
    <property type="match status" value="1"/>
</dbReference>
<dbReference type="InterPro" id="IPR014086">
    <property type="entry name" value="AtzD/Barbiturase"/>
</dbReference>
<dbReference type="InterPro" id="IPR043008">
    <property type="entry name" value="AtzD/Barbiturase_RUA"/>
</dbReference>
<dbReference type="InterPro" id="IPR043006">
    <property type="entry name" value="AtzD/Barbiturase_RUB"/>
</dbReference>
<dbReference type="InterPro" id="IPR043007">
    <property type="entry name" value="AtzD/Barbiturase_RUC"/>
</dbReference>
<dbReference type="NCBIfam" id="TIGR02714">
    <property type="entry name" value="amido_AtzD_TrzD"/>
    <property type="match status" value="1"/>
</dbReference>
<dbReference type="Pfam" id="PF09663">
    <property type="entry name" value="Amido_AtzD_TrzD"/>
    <property type="match status" value="1"/>
</dbReference>
<comment type="function">
    <text evidence="2 3">Responsible for the hydrolysis of cyanuric acid, an intermediate formed during catabolism of s-triazine based compounds in herbicides such as atrazine and polymers such as melamine. Catalyzes the hydrolytic opening of the s-triazine ring of cyanuric acid (2,4,6-trihydroxy-s-triazine) to yield carbon dioxide and carboxybiuret, which spontaneously decarboxylates to biuret.</text>
</comment>
<comment type="catalytic activity">
    <reaction evidence="2 3">
        <text>cyanurate + H2O = 1-carboxybiuret + H(+)</text>
        <dbReference type="Rhea" id="RHEA:70363"/>
        <dbReference type="ChEBI" id="CHEBI:15377"/>
        <dbReference type="ChEBI" id="CHEBI:15378"/>
        <dbReference type="ChEBI" id="CHEBI:38028"/>
        <dbReference type="ChEBI" id="CHEBI:142864"/>
        <dbReference type="EC" id="3.5.2.15"/>
    </reaction>
</comment>
<comment type="activity regulation">
    <text evidence="1 2">Inhibited by barbituric acid.</text>
</comment>
<comment type="biophysicochemical properties">
    <kinetics>
        <KM evidence="3">79 uM for cyanuric acid</KM>
        <text evidence="3">kcat is 2.2 sec(-1) with cyanuric acid as substrate.</text>
    </kinetics>
</comment>
<comment type="pathway">
    <text evidence="2">Xenobiotic degradation; atrazine degradation; biuret from cyanurate: step 1/1.</text>
</comment>
<comment type="subunit">
    <text evidence="1 2">Homotetramer.</text>
</comment>
<comment type="domain">
    <text evidence="2">The monomer structure is formed from three repeating units (RUs) that share the same structure as one another. The monomer, the active site and substrate all possess threefold rotational symmetry, to the extent that the active site possesses three potential Ser-Lys catalytic dyads. It is possible that any or all of the three active-site serines may act as nucleophile (albeit only one can do so per catalytic cycle).</text>
</comment>
<comment type="similarity">
    <text evidence="2 4">Belongs to the cyclic amide hydrolase (CyAH) family.</text>
</comment>
<accession>W6RJ11</accession>